<keyword id="KW-0227">DNA damage</keyword>
<keyword id="KW-0234">DNA repair</keyword>
<keyword id="KW-0238">DNA-binding</keyword>
<keyword id="KW-0326">Glycosidase</keyword>
<keyword id="KW-0378">Hydrolase</keyword>
<keyword id="KW-0456">Lyase</keyword>
<keyword id="KW-0479">Metal-binding</keyword>
<keyword id="KW-0511">Multifunctional enzyme</keyword>
<keyword id="KW-0862">Zinc</keyword>
<keyword id="KW-0863">Zinc-finger</keyword>
<dbReference type="EC" id="3.2.2.23" evidence="2"/>
<dbReference type="EC" id="4.2.99.18" evidence="2"/>
<dbReference type="EMBL" id="CP000514">
    <property type="protein sequence ID" value="ABM20818.1"/>
    <property type="molecule type" value="Genomic_DNA"/>
</dbReference>
<dbReference type="RefSeq" id="WP_011787153.1">
    <property type="nucleotide sequence ID" value="NC_008740.1"/>
</dbReference>
<dbReference type="SMR" id="A1U749"/>
<dbReference type="STRING" id="351348.Maqu_3749"/>
<dbReference type="GeneID" id="31822984"/>
<dbReference type="KEGG" id="maq:Maqu_3749"/>
<dbReference type="eggNOG" id="COG0266">
    <property type="taxonomic scope" value="Bacteria"/>
</dbReference>
<dbReference type="HOGENOM" id="CLU_038423_1_1_6"/>
<dbReference type="OrthoDB" id="9800855at2"/>
<dbReference type="Proteomes" id="UP000000998">
    <property type="component" value="Chromosome"/>
</dbReference>
<dbReference type="GO" id="GO:0034039">
    <property type="term" value="F:8-oxo-7,8-dihydroguanine DNA N-glycosylase activity"/>
    <property type="evidence" value="ECO:0007669"/>
    <property type="project" value="TreeGrafter"/>
</dbReference>
<dbReference type="GO" id="GO:0140078">
    <property type="term" value="F:class I DNA-(apurinic or apyrimidinic site) endonuclease activity"/>
    <property type="evidence" value="ECO:0007669"/>
    <property type="project" value="UniProtKB-EC"/>
</dbReference>
<dbReference type="GO" id="GO:0003684">
    <property type="term" value="F:damaged DNA binding"/>
    <property type="evidence" value="ECO:0007669"/>
    <property type="project" value="InterPro"/>
</dbReference>
<dbReference type="GO" id="GO:0008270">
    <property type="term" value="F:zinc ion binding"/>
    <property type="evidence" value="ECO:0007669"/>
    <property type="project" value="UniProtKB-UniRule"/>
</dbReference>
<dbReference type="GO" id="GO:0006284">
    <property type="term" value="P:base-excision repair"/>
    <property type="evidence" value="ECO:0007669"/>
    <property type="project" value="InterPro"/>
</dbReference>
<dbReference type="CDD" id="cd08966">
    <property type="entry name" value="EcFpg-like_N"/>
    <property type="match status" value="1"/>
</dbReference>
<dbReference type="FunFam" id="1.10.8.50:FF:000003">
    <property type="entry name" value="Formamidopyrimidine-DNA glycosylase"/>
    <property type="match status" value="1"/>
</dbReference>
<dbReference type="FunFam" id="3.20.190.10:FF:000001">
    <property type="entry name" value="Formamidopyrimidine-DNA glycosylase"/>
    <property type="match status" value="1"/>
</dbReference>
<dbReference type="Gene3D" id="1.10.8.50">
    <property type="match status" value="1"/>
</dbReference>
<dbReference type="Gene3D" id="3.20.190.10">
    <property type="entry name" value="MutM-like, N-terminal"/>
    <property type="match status" value="1"/>
</dbReference>
<dbReference type="HAMAP" id="MF_00103">
    <property type="entry name" value="Fapy_DNA_glycosyl"/>
    <property type="match status" value="1"/>
</dbReference>
<dbReference type="InterPro" id="IPR015886">
    <property type="entry name" value="DNA_glyclase/AP_lyase_DNA-bd"/>
</dbReference>
<dbReference type="InterPro" id="IPR015887">
    <property type="entry name" value="DNA_glyclase_Znf_dom_DNA_BS"/>
</dbReference>
<dbReference type="InterPro" id="IPR020629">
    <property type="entry name" value="Formamido-pyr_DNA_Glyclase"/>
</dbReference>
<dbReference type="InterPro" id="IPR012319">
    <property type="entry name" value="FPG_cat"/>
</dbReference>
<dbReference type="InterPro" id="IPR035937">
    <property type="entry name" value="MutM-like_N-ter"/>
</dbReference>
<dbReference type="InterPro" id="IPR010979">
    <property type="entry name" value="Ribosomal_uS13-like_H2TH"/>
</dbReference>
<dbReference type="InterPro" id="IPR000214">
    <property type="entry name" value="Znf_DNA_glyclase/AP_lyase"/>
</dbReference>
<dbReference type="InterPro" id="IPR010663">
    <property type="entry name" value="Znf_FPG/IleRS"/>
</dbReference>
<dbReference type="NCBIfam" id="TIGR00577">
    <property type="entry name" value="fpg"/>
    <property type="match status" value="1"/>
</dbReference>
<dbReference type="NCBIfam" id="NF002211">
    <property type="entry name" value="PRK01103.1"/>
    <property type="match status" value="1"/>
</dbReference>
<dbReference type="PANTHER" id="PTHR22993">
    <property type="entry name" value="FORMAMIDOPYRIMIDINE-DNA GLYCOSYLASE"/>
    <property type="match status" value="1"/>
</dbReference>
<dbReference type="PANTHER" id="PTHR22993:SF9">
    <property type="entry name" value="FORMAMIDOPYRIMIDINE-DNA GLYCOSYLASE"/>
    <property type="match status" value="1"/>
</dbReference>
<dbReference type="Pfam" id="PF01149">
    <property type="entry name" value="Fapy_DNA_glyco"/>
    <property type="match status" value="1"/>
</dbReference>
<dbReference type="Pfam" id="PF06831">
    <property type="entry name" value="H2TH"/>
    <property type="match status" value="1"/>
</dbReference>
<dbReference type="Pfam" id="PF06827">
    <property type="entry name" value="zf-FPG_IleRS"/>
    <property type="match status" value="1"/>
</dbReference>
<dbReference type="SMART" id="SM00898">
    <property type="entry name" value="Fapy_DNA_glyco"/>
    <property type="match status" value="1"/>
</dbReference>
<dbReference type="SMART" id="SM01232">
    <property type="entry name" value="H2TH"/>
    <property type="match status" value="1"/>
</dbReference>
<dbReference type="SUPFAM" id="SSF57716">
    <property type="entry name" value="Glucocorticoid receptor-like (DNA-binding domain)"/>
    <property type="match status" value="1"/>
</dbReference>
<dbReference type="SUPFAM" id="SSF81624">
    <property type="entry name" value="N-terminal domain of MutM-like DNA repair proteins"/>
    <property type="match status" value="1"/>
</dbReference>
<dbReference type="SUPFAM" id="SSF46946">
    <property type="entry name" value="S13-like H2TH domain"/>
    <property type="match status" value="1"/>
</dbReference>
<dbReference type="PROSITE" id="PS51068">
    <property type="entry name" value="FPG_CAT"/>
    <property type="match status" value="1"/>
</dbReference>
<dbReference type="PROSITE" id="PS01242">
    <property type="entry name" value="ZF_FPG_1"/>
    <property type="match status" value="1"/>
</dbReference>
<dbReference type="PROSITE" id="PS51066">
    <property type="entry name" value="ZF_FPG_2"/>
    <property type="match status" value="1"/>
</dbReference>
<proteinExistence type="inferred from homology"/>
<name>FPG_MARN8</name>
<sequence>MPELPEVETTRQGIAPHCEGQTIQRVIVRNPSLRWPVPADLAEHLEGKTIRAVERRAKYLFLHLETGSVIVHLGMSGSLRVITDDSPAMTHDHVELVLGNHRRLRFNDPRRFGCWLWTTDWNRHPLISALGPEPLSEDFNGAWLFRLSRQKQTPVKSFIMDNHVVVGVGNIYANEALFKAGIHPKRKAGRISLDRYHKLAEAIRETLSAAILMGGTTLRDFVNSDGKPGYFAQSLLVYGKAGAPCTECNTPLKEIRMNNRSTVYCPRCQR</sequence>
<organism>
    <name type="scientific">Marinobacter nauticus (strain ATCC 700491 / DSM 11845 / VT8)</name>
    <name type="common">Marinobacter aquaeolei</name>
    <dbReference type="NCBI Taxonomy" id="351348"/>
    <lineage>
        <taxon>Bacteria</taxon>
        <taxon>Pseudomonadati</taxon>
        <taxon>Pseudomonadota</taxon>
        <taxon>Gammaproteobacteria</taxon>
        <taxon>Pseudomonadales</taxon>
        <taxon>Marinobacteraceae</taxon>
        <taxon>Marinobacter</taxon>
    </lineage>
</organism>
<comment type="function">
    <text evidence="2">Involved in base excision repair of DNA damaged by oxidation or by mutagenic agents. Acts as a DNA glycosylase that recognizes and removes damaged bases. Has a preference for oxidized purines, such as 7,8-dihydro-8-oxoguanine (8-oxoG). Has AP (apurinic/apyrimidinic) lyase activity and introduces nicks in the DNA strand. Cleaves the DNA backbone by beta-delta elimination to generate a single-strand break at the site of the removed base with both 3'- and 5'-phosphates.</text>
</comment>
<comment type="catalytic activity">
    <reaction evidence="2">
        <text>Hydrolysis of DNA containing ring-opened 7-methylguanine residues, releasing 2,6-diamino-4-hydroxy-5-(N-methyl)formamidopyrimidine.</text>
        <dbReference type="EC" id="3.2.2.23"/>
    </reaction>
</comment>
<comment type="catalytic activity">
    <reaction evidence="2">
        <text>2'-deoxyribonucleotide-(2'-deoxyribose 5'-phosphate)-2'-deoxyribonucleotide-DNA = a 3'-end 2'-deoxyribonucleotide-(2,3-dehydro-2,3-deoxyribose 5'-phosphate)-DNA + a 5'-end 5'-phospho-2'-deoxyribonucleoside-DNA + H(+)</text>
        <dbReference type="Rhea" id="RHEA:66592"/>
        <dbReference type="Rhea" id="RHEA-COMP:13180"/>
        <dbReference type="Rhea" id="RHEA-COMP:16897"/>
        <dbReference type="Rhea" id="RHEA-COMP:17067"/>
        <dbReference type="ChEBI" id="CHEBI:15378"/>
        <dbReference type="ChEBI" id="CHEBI:136412"/>
        <dbReference type="ChEBI" id="CHEBI:157695"/>
        <dbReference type="ChEBI" id="CHEBI:167181"/>
        <dbReference type="EC" id="4.2.99.18"/>
    </reaction>
</comment>
<comment type="cofactor">
    <cofactor evidence="2">
        <name>Zn(2+)</name>
        <dbReference type="ChEBI" id="CHEBI:29105"/>
    </cofactor>
    <text evidence="2">Binds 1 zinc ion per subunit.</text>
</comment>
<comment type="subunit">
    <text evidence="2">Monomer.</text>
</comment>
<comment type="similarity">
    <text evidence="2">Belongs to the FPG family.</text>
</comment>
<gene>
    <name evidence="2" type="primary">mutM</name>
    <name evidence="2" type="synonym">fpg</name>
    <name type="ordered locus">Maqu_3749</name>
</gene>
<feature type="initiator methionine" description="Removed" evidence="1">
    <location>
        <position position="1"/>
    </location>
</feature>
<feature type="chain" id="PRO_1000008713" description="Formamidopyrimidine-DNA glycosylase">
    <location>
        <begin position="2"/>
        <end position="270"/>
    </location>
</feature>
<feature type="zinc finger region" description="FPG-type" evidence="2">
    <location>
        <begin position="236"/>
        <end position="270"/>
    </location>
</feature>
<feature type="active site" description="Schiff-base intermediate with DNA" evidence="2">
    <location>
        <position position="2"/>
    </location>
</feature>
<feature type="active site" description="Proton donor" evidence="2">
    <location>
        <position position="3"/>
    </location>
</feature>
<feature type="active site" description="Proton donor; for beta-elimination activity" evidence="2">
    <location>
        <position position="58"/>
    </location>
</feature>
<feature type="active site" description="Proton donor; for delta-elimination activity" evidence="2">
    <location>
        <position position="260"/>
    </location>
</feature>
<feature type="binding site" evidence="2">
    <location>
        <position position="91"/>
    </location>
    <ligand>
        <name>DNA</name>
        <dbReference type="ChEBI" id="CHEBI:16991"/>
    </ligand>
</feature>
<feature type="binding site" evidence="2">
    <location>
        <position position="110"/>
    </location>
    <ligand>
        <name>DNA</name>
        <dbReference type="ChEBI" id="CHEBI:16991"/>
    </ligand>
</feature>
<feature type="binding site" evidence="2">
    <location>
        <position position="151"/>
    </location>
    <ligand>
        <name>DNA</name>
        <dbReference type="ChEBI" id="CHEBI:16991"/>
    </ligand>
</feature>
<protein>
    <recommendedName>
        <fullName evidence="2">Formamidopyrimidine-DNA glycosylase</fullName>
        <shortName evidence="2">Fapy-DNA glycosylase</shortName>
        <ecNumber evidence="2">3.2.2.23</ecNumber>
    </recommendedName>
    <alternativeName>
        <fullName evidence="2">DNA-(apurinic or apyrimidinic site) lyase MutM</fullName>
        <shortName evidence="2">AP lyase MutM</shortName>
        <ecNumber evidence="2">4.2.99.18</ecNumber>
    </alternativeName>
</protein>
<accession>A1U749</accession>
<reference key="1">
    <citation type="journal article" date="2011" name="Appl. Environ. Microbiol.">
        <title>Genomic potential of Marinobacter aquaeolei, a biogeochemical 'opportunitroph'.</title>
        <authorList>
            <person name="Singer E."/>
            <person name="Webb E.A."/>
            <person name="Nelson W.C."/>
            <person name="Heidelberg J.F."/>
            <person name="Ivanova N."/>
            <person name="Pati A."/>
            <person name="Edwards K.J."/>
        </authorList>
    </citation>
    <scope>NUCLEOTIDE SEQUENCE [LARGE SCALE GENOMIC DNA]</scope>
    <source>
        <strain>ATCC 700491 / DSM 11845 / VT8</strain>
    </source>
</reference>
<evidence type="ECO:0000250" key="1"/>
<evidence type="ECO:0000255" key="2">
    <source>
        <dbReference type="HAMAP-Rule" id="MF_00103"/>
    </source>
</evidence>